<comment type="function">
    <text evidence="1 4 5 7">Central component of cohesin, a complex required for chromosome cohesion during the cell cycle. The cohesin complex may form a large proteinaceous ring within which sister chromatids can be trapped. At anaphase, the complex is cleaved and dissociates from chromatin, allowing sister chromatids to segregate. Cohesion is coupled to DNA replication and is involved in DNA repair. The cohesin complex also plays an important role in spindle pole assembly during mitosis and in chromosomes movement (By similarity). Essential protein plant viability. Required for chromosome segregation (e.g. sister chromatid alignment) and cell division during embryogenesis.</text>
</comment>
<comment type="subunit">
    <text evidence="1">Cohesin complexes are composed of the SMC1 and SMC3 heterodimer attached via their SMC hinge domain, SCC3, and an alpha-kleisin subunit SCC1 linked to one SYN subunit (SYN1, SYN2, SYN3 or SYN4).</text>
</comment>
<comment type="subcellular location">
    <subcellularLocation>
        <location evidence="6">Nucleus</location>
    </subcellularLocation>
    <subcellularLocation>
        <location evidence="6">Cytoplasm</location>
    </subcellularLocation>
    <subcellularLocation>
        <location evidence="6">Nucleus matrix</location>
    </subcellularLocation>
    <subcellularLocation>
        <location evidence="6">Chromosome</location>
    </subcellularLocation>
    <subcellularLocation>
        <location evidence="6">Cytoplasm</location>
        <location evidence="6">Cytoskeleton</location>
        <location evidence="6">Spindle</location>
    </subcellularLocation>
    <subcellularLocation>
        <location evidence="1">Chromosome</location>
        <location evidence="1">Centromere</location>
    </subcellularLocation>
    <text>Primarily associated with the nuclear matrix during interphase and with chromatin from prophase through anaphase in both somatic and meiotic cells. During mitosis and meiosis the protein also colocalized with the spindle from metaphase to telophase.</text>
</comment>
<comment type="tissue specificity">
    <text evidence="6">Mostly expressed in flower buds and leaves, and, to a lower extent, in roots and stems.</text>
</comment>
<comment type="domain">
    <text evidence="1">The flexible SMC hinge domain, which separates the large intramolecular coiled coil regions, allows the heterotypic interaction with the corresponding domain of SMC1A or SMC1B, forming a V-shaped heterodimer. The two heads of the heterodimer are then connected by different ends of the cleavable RAD21 protein, forming a ring structure (By similarity).</text>
</comment>
<comment type="PTM">
    <text evidence="1">Acetylation at Lys-105 and Lys-106 is important for genome stability and S phase sister chromatid cohesion.</text>
</comment>
<comment type="PTM">
    <text evidence="1">Phosphorylated upon DNA damage.</text>
</comment>
<comment type="disruption phenotype">
    <text evidence="4 5 7">Altered chromosome dynamics and cell division during seed development, leading to aberrant mitoses and giant polyploid nuclei in endosperm as well as arrested embryos with a few small cells.</text>
</comment>
<comment type="similarity">
    <text evidence="8">Belongs to the SMC family. SMC3 subfamily.</text>
</comment>
<comment type="sequence caution" evidence="8">
    <conflict type="erroneous gene model prediction">
        <sequence resource="EMBL-CDS" id="AAD26882"/>
    </conflict>
</comment>
<comment type="sequence caution" evidence="8">
    <conflict type="erroneous gene model prediction">
        <sequence resource="EMBL-CDS" id="AAM15423"/>
    </conflict>
</comment>
<organism>
    <name type="scientific">Arabidopsis thaliana</name>
    <name type="common">Mouse-ear cress</name>
    <dbReference type="NCBI Taxonomy" id="3702"/>
    <lineage>
        <taxon>Eukaryota</taxon>
        <taxon>Viridiplantae</taxon>
        <taxon>Streptophyta</taxon>
        <taxon>Embryophyta</taxon>
        <taxon>Tracheophyta</taxon>
        <taxon>Spermatophyta</taxon>
        <taxon>Magnoliopsida</taxon>
        <taxon>eudicotyledons</taxon>
        <taxon>Gunneridae</taxon>
        <taxon>Pentapetalae</taxon>
        <taxon>rosids</taxon>
        <taxon>malvids</taxon>
        <taxon>Brassicales</taxon>
        <taxon>Brassicaceae</taxon>
        <taxon>Camelineae</taxon>
        <taxon>Arabidopsis</taxon>
    </lineage>
</organism>
<gene>
    <name type="primary">SMC3</name>
    <name type="synonym">TTN7</name>
    <name type="ordered locus">At2g27170</name>
    <name type="ORF">T22O13.6</name>
</gene>
<keyword id="KW-0007">Acetylation</keyword>
<keyword id="KW-0067">ATP-binding</keyword>
<keyword id="KW-0131">Cell cycle</keyword>
<keyword id="KW-0132">Cell division</keyword>
<keyword id="KW-0137">Centromere</keyword>
<keyword id="KW-0158">Chromosome</keyword>
<keyword id="KW-0175">Coiled coil</keyword>
<keyword id="KW-0963">Cytoplasm</keyword>
<keyword id="KW-0206">Cytoskeleton</keyword>
<keyword id="KW-0227">DNA damage</keyword>
<keyword id="KW-0234">DNA repair</keyword>
<keyword id="KW-0469">Meiosis</keyword>
<keyword id="KW-0498">Mitosis</keyword>
<keyword id="KW-0547">Nucleotide-binding</keyword>
<keyword id="KW-0539">Nucleus</keyword>
<keyword id="KW-0597">Phosphoprotein</keyword>
<keyword id="KW-1185">Reference proteome</keyword>
<keyword id="KW-0677">Repeat</keyword>
<protein>
    <recommendedName>
        <fullName>Structural maintenance of chromosomes protein 3</fullName>
        <shortName>SMC protein 3</shortName>
        <shortName>SMC-3</shortName>
    </recommendedName>
    <alternativeName>
        <fullName>Chromosome segregation protein SMC-3</fullName>
    </alternativeName>
    <alternativeName>
        <fullName>Cohesin complex subunit SMC-3</fullName>
    </alternativeName>
    <alternativeName>
        <fullName>Protein TITAN7</fullName>
    </alternativeName>
</protein>
<dbReference type="EMBL" id="AJ504805">
    <property type="protein sequence ID" value="CAD43403.2"/>
    <property type="molecule type" value="mRNA"/>
</dbReference>
<dbReference type="EMBL" id="AY525642">
    <property type="protein sequence ID" value="AAS09910.1"/>
    <property type="molecule type" value="mRNA"/>
</dbReference>
<dbReference type="EMBL" id="AC007154">
    <property type="protein sequence ID" value="AAM15423.1"/>
    <property type="status" value="ALT_SEQ"/>
    <property type="molecule type" value="Genomic_DNA"/>
</dbReference>
<dbReference type="EMBL" id="AC007290">
    <property type="protein sequence ID" value="AAD26882.3"/>
    <property type="status" value="ALT_SEQ"/>
    <property type="molecule type" value="Genomic_DNA"/>
</dbReference>
<dbReference type="EMBL" id="CP002685">
    <property type="protein sequence ID" value="AEC07948.1"/>
    <property type="molecule type" value="Genomic_DNA"/>
</dbReference>
<dbReference type="EMBL" id="CP002685">
    <property type="protein sequence ID" value="AEC07949.1"/>
    <property type="molecule type" value="Genomic_DNA"/>
</dbReference>
<dbReference type="EMBL" id="AK220965">
    <property type="protein sequence ID" value="BAD94521.1"/>
    <property type="molecule type" value="mRNA"/>
</dbReference>
<dbReference type="EMBL" id="AK221283">
    <property type="protein sequence ID" value="BAD93989.1"/>
    <property type="molecule type" value="mRNA"/>
</dbReference>
<dbReference type="EMBL" id="AK226305">
    <property type="protein sequence ID" value="BAE98460.1"/>
    <property type="molecule type" value="mRNA"/>
</dbReference>
<dbReference type="EMBL" id="AK229499">
    <property type="protein sequence ID" value="BAF01356.1"/>
    <property type="molecule type" value="mRNA"/>
</dbReference>
<dbReference type="PIR" id="F84669">
    <property type="entry name" value="F84669"/>
</dbReference>
<dbReference type="RefSeq" id="NP_001077968.1">
    <property type="nucleotide sequence ID" value="NM_001084499.2"/>
</dbReference>
<dbReference type="RefSeq" id="NP_180285.4">
    <property type="nucleotide sequence ID" value="NM_128275.5"/>
</dbReference>
<dbReference type="SMR" id="Q56YN8"/>
<dbReference type="BioGRID" id="2611">
    <property type="interactions" value="1"/>
</dbReference>
<dbReference type="FunCoup" id="Q56YN8">
    <property type="interactions" value="4357"/>
</dbReference>
<dbReference type="STRING" id="3702.Q56YN8"/>
<dbReference type="iPTMnet" id="Q56YN8"/>
<dbReference type="PaxDb" id="3702-AT2G27170.2"/>
<dbReference type="ProteomicsDB" id="226747"/>
<dbReference type="EnsemblPlants" id="AT2G27170.1">
    <property type="protein sequence ID" value="AT2G27170.1"/>
    <property type="gene ID" value="AT2G27170"/>
</dbReference>
<dbReference type="EnsemblPlants" id="AT2G27170.2">
    <property type="protein sequence ID" value="AT2G27170.2"/>
    <property type="gene ID" value="AT2G27170"/>
</dbReference>
<dbReference type="GeneID" id="817259"/>
<dbReference type="Gramene" id="AT2G27170.1">
    <property type="protein sequence ID" value="AT2G27170.1"/>
    <property type="gene ID" value="AT2G27170"/>
</dbReference>
<dbReference type="Gramene" id="AT2G27170.2">
    <property type="protein sequence ID" value="AT2G27170.2"/>
    <property type="gene ID" value="AT2G27170"/>
</dbReference>
<dbReference type="KEGG" id="ath:AT2G27170"/>
<dbReference type="Araport" id="AT2G27170"/>
<dbReference type="TAIR" id="AT2G27170">
    <property type="gene designation" value="TTN7"/>
</dbReference>
<dbReference type="eggNOG" id="KOG0964">
    <property type="taxonomic scope" value="Eukaryota"/>
</dbReference>
<dbReference type="HOGENOM" id="CLU_001042_5_0_1"/>
<dbReference type="InParanoid" id="Q56YN8"/>
<dbReference type="PhylomeDB" id="Q56YN8"/>
<dbReference type="CD-CODE" id="33FCD62D">
    <property type="entry name" value="Centrosome"/>
</dbReference>
<dbReference type="CD-CODE" id="4299E36E">
    <property type="entry name" value="Nucleolus"/>
</dbReference>
<dbReference type="PRO" id="PR:Q56YN8"/>
<dbReference type="Proteomes" id="UP000006548">
    <property type="component" value="Chromosome 2"/>
</dbReference>
<dbReference type="ExpressionAtlas" id="Q56YN8">
    <property type="expression patterns" value="baseline and differential"/>
</dbReference>
<dbReference type="GO" id="GO:0000785">
    <property type="term" value="C:chromatin"/>
    <property type="evidence" value="ECO:0000314"/>
    <property type="project" value="UniProtKB"/>
</dbReference>
<dbReference type="GO" id="GO:0000775">
    <property type="term" value="C:chromosome, centromeric region"/>
    <property type="evidence" value="ECO:0007669"/>
    <property type="project" value="UniProtKB-SubCell"/>
</dbReference>
<dbReference type="GO" id="GO:0008278">
    <property type="term" value="C:cohesin complex"/>
    <property type="evidence" value="ECO:0000250"/>
    <property type="project" value="TAIR"/>
</dbReference>
<dbReference type="GO" id="GO:0005737">
    <property type="term" value="C:cytoplasm"/>
    <property type="evidence" value="ECO:0000314"/>
    <property type="project" value="UniProtKB"/>
</dbReference>
<dbReference type="GO" id="GO:0016363">
    <property type="term" value="C:nuclear matrix"/>
    <property type="evidence" value="ECO:0000314"/>
    <property type="project" value="UniProtKB"/>
</dbReference>
<dbReference type="GO" id="GO:0005634">
    <property type="term" value="C:nucleus"/>
    <property type="evidence" value="ECO:0000314"/>
    <property type="project" value="UniProtKB"/>
</dbReference>
<dbReference type="GO" id="GO:0009506">
    <property type="term" value="C:plasmodesma"/>
    <property type="evidence" value="ECO:0007005"/>
    <property type="project" value="TAIR"/>
</dbReference>
<dbReference type="GO" id="GO:0005819">
    <property type="term" value="C:spindle"/>
    <property type="evidence" value="ECO:0000314"/>
    <property type="project" value="UniProtKB"/>
</dbReference>
<dbReference type="GO" id="GO:0005524">
    <property type="term" value="F:ATP binding"/>
    <property type="evidence" value="ECO:0007669"/>
    <property type="project" value="UniProtKB-KW"/>
</dbReference>
<dbReference type="GO" id="GO:0016887">
    <property type="term" value="F:ATP hydrolysis activity"/>
    <property type="evidence" value="ECO:0007669"/>
    <property type="project" value="InterPro"/>
</dbReference>
<dbReference type="GO" id="GO:0003682">
    <property type="term" value="F:chromatin binding"/>
    <property type="evidence" value="ECO:0000314"/>
    <property type="project" value="UniProtKB"/>
</dbReference>
<dbReference type="GO" id="GO:0051301">
    <property type="term" value="P:cell division"/>
    <property type="evidence" value="ECO:0007669"/>
    <property type="project" value="UniProtKB-KW"/>
</dbReference>
<dbReference type="GO" id="GO:0007059">
    <property type="term" value="P:chromosome segregation"/>
    <property type="evidence" value="ECO:0000315"/>
    <property type="project" value="UniProtKB"/>
</dbReference>
<dbReference type="GO" id="GO:0006281">
    <property type="term" value="P:DNA repair"/>
    <property type="evidence" value="ECO:0007669"/>
    <property type="project" value="UniProtKB-KW"/>
</dbReference>
<dbReference type="GO" id="GO:0051321">
    <property type="term" value="P:meiotic cell cycle"/>
    <property type="evidence" value="ECO:0007669"/>
    <property type="project" value="UniProtKB-KW"/>
</dbReference>
<dbReference type="GO" id="GO:0007062">
    <property type="term" value="P:sister chromatid cohesion"/>
    <property type="evidence" value="ECO:0000315"/>
    <property type="project" value="TAIR"/>
</dbReference>
<dbReference type="CDD" id="cd03272">
    <property type="entry name" value="ABC_SMC3_euk"/>
    <property type="match status" value="1"/>
</dbReference>
<dbReference type="FunFam" id="3.40.50.300:FF:000370">
    <property type="entry name" value="Structural maintenance of chromosomes 3"/>
    <property type="match status" value="1"/>
</dbReference>
<dbReference type="FunFam" id="3.40.50.300:FF:000424">
    <property type="entry name" value="Structural maintenance of chromosomes 3"/>
    <property type="match status" value="1"/>
</dbReference>
<dbReference type="FunFam" id="3.30.70.1620:FF:000013">
    <property type="entry name" value="Structural maintenance of chromosomes protein 3"/>
    <property type="match status" value="1"/>
</dbReference>
<dbReference type="Gene3D" id="1.20.1060.20">
    <property type="match status" value="1"/>
</dbReference>
<dbReference type="Gene3D" id="3.30.70.1620">
    <property type="match status" value="1"/>
</dbReference>
<dbReference type="Gene3D" id="3.40.50.300">
    <property type="entry name" value="P-loop containing nucleotide triphosphate hydrolases"/>
    <property type="match status" value="2"/>
</dbReference>
<dbReference type="InterPro" id="IPR027417">
    <property type="entry name" value="P-loop_NTPase"/>
</dbReference>
<dbReference type="InterPro" id="IPR003395">
    <property type="entry name" value="RecF/RecN/SMC_N"/>
</dbReference>
<dbReference type="InterPro" id="IPR024704">
    <property type="entry name" value="SMC"/>
</dbReference>
<dbReference type="InterPro" id="IPR041741">
    <property type="entry name" value="SMC3_ABC_euk"/>
</dbReference>
<dbReference type="InterPro" id="IPR010935">
    <property type="entry name" value="SMC_hinge"/>
</dbReference>
<dbReference type="InterPro" id="IPR036277">
    <property type="entry name" value="SMC_hinge_sf"/>
</dbReference>
<dbReference type="PANTHER" id="PTHR43977">
    <property type="entry name" value="STRUCTURAL MAINTENANCE OF CHROMOSOMES PROTEIN 3"/>
    <property type="match status" value="1"/>
</dbReference>
<dbReference type="Pfam" id="PF06470">
    <property type="entry name" value="SMC_hinge"/>
    <property type="match status" value="1"/>
</dbReference>
<dbReference type="Pfam" id="PF02463">
    <property type="entry name" value="SMC_N"/>
    <property type="match status" value="1"/>
</dbReference>
<dbReference type="PIRSF" id="PIRSF005719">
    <property type="entry name" value="SMC"/>
    <property type="match status" value="1"/>
</dbReference>
<dbReference type="SMART" id="SM00968">
    <property type="entry name" value="SMC_hinge"/>
    <property type="match status" value="1"/>
</dbReference>
<dbReference type="SUPFAM" id="SSF52540">
    <property type="entry name" value="P-loop containing nucleoside triphosphate hydrolases"/>
    <property type="match status" value="2"/>
</dbReference>
<dbReference type="SUPFAM" id="SSF75553">
    <property type="entry name" value="Smc hinge domain"/>
    <property type="match status" value="1"/>
</dbReference>
<feature type="chain" id="PRO_0000421563" description="Structural maintenance of chromosomes protein 3">
    <location>
        <begin position="1"/>
        <end position="1204"/>
    </location>
</feature>
<feature type="domain" description="Zinc-hook">
    <location>
        <begin position="2"/>
        <end position="1180"/>
    </location>
</feature>
<feature type="domain" description="SMC hinge">
    <location>
        <begin position="522"/>
        <end position="633"/>
    </location>
</feature>
<feature type="region of interest" description="Disordered" evidence="3">
    <location>
        <begin position="455"/>
        <end position="474"/>
    </location>
</feature>
<feature type="coiled-coil region" evidence="2">
    <location>
        <begin position="190"/>
        <end position="420"/>
    </location>
</feature>
<feature type="coiled-coil region" evidence="2">
    <location>
        <begin position="474"/>
        <end position="502"/>
    </location>
</feature>
<feature type="coiled-coil region" evidence="2">
    <location>
        <begin position="673"/>
        <end position="744"/>
    </location>
</feature>
<feature type="coiled-coil region" evidence="2">
    <location>
        <begin position="803"/>
        <end position="1009"/>
    </location>
</feature>
<feature type="short sequence motif" description="Nuclear localization signal 1" evidence="1">
    <location>
        <begin position="171"/>
        <end position="178"/>
    </location>
</feature>
<feature type="short sequence motif" description="Nuclear localization signal 2" evidence="1">
    <location>
        <begin position="457"/>
        <end position="464"/>
    </location>
</feature>
<feature type="short sequence motif" description="Nuclear localization signal 3" evidence="1">
    <location>
        <begin position="650"/>
        <end position="657"/>
    </location>
</feature>
<feature type="short sequence motif" description="Nuclear localization signal 4" evidence="1">
    <location>
        <begin position="799"/>
        <end position="806"/>
    </location>
</feature>
<feature type="binding site" evidence="2">
    <location>
        <begin position="32"/>
        <end position="39"/>
    </location>
    <ligand>
        <name>ATP</name>
        <dbReference type="ChEBI" id="CHEBI:30616"/>
    </ligand>
</feature>
<feature type="sequence conflict" description="In Ref. 1; CAD43403." evidence="8" ref="1">
    <original>LQV</original>
    <variation>HVSL</variation>
    <location>
        <begin position="694"/>
        <end position="696"/>
    </location>
</feature>
<feature type="sequence conflict" description="In Ref. 2; AAS09910." evidence="8" ref="2">
    <original>N</original>
    <variation>H</variation>
    <location>
        <position position="1055"/>
    </location>
</feature>
<evidence type="ECO:0000250" key="1"/>
<evidence type="ECO:0000255" key="2"/>
<evidence type="ECO:0000256" key="3">
    <source>
        <dbReference type="SAM" id="MobiDB-lite"/>
    </source>
</evidence>
<evidence type="ECO:0000269" key="4">
    <source>
    </source>
</evidence>
<evidence type="ECO:0000269" key="5">
    <source>
    </source>
</evidence>
<evidence type="ECO:0000269" key="6">
    <source>
    </source>
</evidence>
<evidence type="ECO:0000269" key="7">
    <source>
    </source>
</evidence>
<evidence type="ECO:0000305" key="8"/>
<sequence length="1204" mass="139371">MFIKQVIIEGFKSYKEQVATEEFSNKVNCVVGANGSGKSNFFHAIRFVLSDIYQNLRSEDRHALLHEGAGHQVVSAFVEIVFDNSDNRFPVDKEEIRLRRTVGLKKDDYFLDGKHITKGEVMNLLESAGFSRANPYYVVQQGKIASLTLMKDIERLDLLKEIGGTRVYEERRRESLRIMQETGNKRKQIIEVVHYLDERLRELDEEKEELRKYQQLDKQRKSLEYTIYDKELHDAREKLEQVEVARTKASEESTKMYDRVEKAQDDSKSLDESLKELTKELQTLYKEKETVEAQQTKALKKKTKLELDVKDFQDRITGNIQSKNDALEQLNTVEREMQDSLRELEAIKPLYESQVDKENQTSKRINELEKTLSILYQKQGRATQFSNKAARDKWLRKEIEDLKRVLDSNTVQEQKLQDEILRLNTDLTERDEHIKKHEVEIGELESRISKSHELFNTKKRERDEEQRKRKEKWGEESQLSSEIDKLKTELERAKKNLDHATPGDVRRGLNSIRRICADYRINGVFGPLVELVDCDEKFFTAVEVTAGNSLFNVVVENDDISTKIIRHLNSLKGGRVTFLPLNRIKAPRVNYPKDSDAIPLLKKLKFDSKFEPALGQVFGRTVVCRDLNVATRVAKNDDLDCITMEGDQVSRKGGMTGGFYDHRRSKLRFMNIIMQNTKSINEKEKELEDVRRQLQVIDQQITQLVTEQQRLEADWTLCKLQVEQLKQEIANANKQKHAIHKAIEYKEKLLGDIRTRIDQVRSSMSMKEAEMGTELVDHLTPEEREQLSKLNPEIKDLKEKKFAYQADRIERETRKAELEANIATNLKRRITELQATIASIDDDSLPSSAGTKEQELDDAKLSVNEAAKELKSVCDSIDEKTKQIKKIKDEKAKLKTLEDDCKGTLQDLDKKLEELFSLRNTLLAKQDEYTKKIRGLGPLSSDAFDTYKRKNIKELQKMLHRCSEQLQQFSHVNKKALDQYVNFTEQREELQNRQAELDAGDEKIKELITVLDQRKDESIERTFKGVAHHFRDVFSELVQDGYGNLIIMKKKDLDNDDEDDDDDDGGREAVTEGRVEKYIGVKVKVSFTGQGETQLMKQLSGGQKTVVALALIFAIQRCDPAPFYLFDEIDAALDPQYRTAVGNLIRRLADDYGTQFITTTFRPELVRVADKIYGVFHKNRVSIVNVISKDQALDFIEKDQSHDT</sequence>
<proteinExistence type="evidence at transcript level"/>
<reference key="1">
    <citation type="journal article" date="2004" name="Mol. Biol. Evol.">
        <title>The evolution of SMC proteins: phylogenetic analysis and structural implications.</title>
        <authorList>
            <person name="Cobbe N."/>
            <person name="Heck M.M.S."/>
        </authorList>
    </citation>
    <scope>NUCLEOTIDE SEQUENCE [MRNA]</scope>
</reference>
<reference key="2">
    <citation type="journal article" date="2005" name="J. Cell Sci.">
        <title>Characterization of Arabidopsis thaliana SMC1 and SMC3: evidence that AtSMC3 may function beyond chromosome cohesion.</title>
        <authorList>
            <person name="Lam W.S."/>
            <person name="Yang X."/>
            <person name="Makaroff C.A."/>
        </authorList>
    </citation>
    <scope>NUCLEOTIDE SEQUENCE [MRNA]</scope>
    <scope>SUBCELLULAR LOCATION</scope>
    <scope>TISSUE SPECIFICITY</scope>
    <source>
        <strain>cv. Columbia</strain>
        <strain>cv. Landsberg erecta</strain>
        <strain>cv. Wassilewskija</strain>
    </source>
</reference>
<reference key="3">
    <citation type="journal article" date="1999" name="Nature">
        <title>Sequence and analysis of chromosome 2 of the plant Arabidopsis thaliana.</title>
        <authorList>
            <person name="Lin X."/>
            <person name="Kaul S."/>
            <person name="Rounsley S.D."/>
            <person name="Shea T.P."/>
            <person name="Benito M.-I."/>
            <person name="Town C.D."/>
            <person name="Fujii C.Y."/>
            <person name="Mason T.M."/>
            <person name="Bowman C.L."/>
            <person name="Barnstead M.E."/>
            <person name="Feldblyum T.V."/>
            <person name="Buell C.R."/>
            <person name="Ketchum K.A."/>
            <person name="Lee J.J."/>
            <person name="Ronning C.M."/>
            <person name="Koo H.L."/>
            <person name="Moffat K.S."/>
            <person name="Cronin L.A."/>
            <person name="Shen M."/>
            <person name="Pai G."/>
            <person name="Van Aken S."/>
            <person name="Umayam L."/>
            <person name="Tallon L.J."/>
            <person name="Gill J.E."/>
            <person name="Adams M.D."/>
            <person name="Carrera A.J."/>
            <person name="Creasy T.H."/>
            <person name="Goodman H.M."/>
            <person name="Somerville C.R."/>
            <person name="Copenhaver G.P."/>
            <person name="Preuss D."/>
            <person name="Nierman W.C."/>
            <person name="White O."/>
            <person name="Eisen J.A."/>
            <person name="Salzberg S.L."/>
            <person name="Fraser C.M."/>
            <person name="Venter J.C."/>
        </authorList>
    </citation>
    <scope>NUCLEOTIDE SEQUENCE [LARGE SCALE GENOMIC DNA]</scope>
    <source>
        <strain>cv. Columbia</strain>
    </source>
</reference>
<reference key="4">
    <citation type="journal article" date="2017" name="Plant J.">
        <title>Araport11: a complete reannotation of the Arabidopsis thaliana reference genome.</title>
        <authorList>
            <person name="Cheng C.Y."/>
            <person name="Krishnakumar V."/>
            <person name="Chan A.P."/>
            <person name="Thibaud-Nissen F."/>
            <person name="Schobel S."/>
            <person name="Town C.D."/>
        </authorList>
    </citation>
    <scope>GENOME REANNOTATION</scope>
    <source>
        <strain>cv. Columbia</strain>
    </source>
</reference>
<reference key="5">
    <citation type="submission" date="2005-03" db="EMBL/GenBank/DDBJ databases">
        <title>Large-scale analysis of RIKEN Arabidopsis full-length (RAFL) cDNAs.</title>
        <authorList>
            <person name="Totoki Y."/>
            <person name="Seki M."/>
            <person name="Ishida J."/>
            <person name="Nakajima M."/>
            <person name="Enju A."/>
            <person name="Kamiya A."/>
            <person name="Narusaka M."/>
            <person name="Shin-i T."/>
            <person name="Nakagawa M."/>
            <person name="Sakamoto N."/>
            <person name="Oishi K."/>
            <person name="Kohara Y."/>
            <person name="Kobayashi M."/>
            <person name="Toyoda A."/>
            <person name="Sakaki Y."/>
            <person name="Sakurai T."/>
            <person name="Iida K."/>
            <person name="Akiyama K."/>
            <person name="Satou M."/>
            <person name="Toyoda T."/>
            <person name="Konagaya A."/>
            <person name="Carninci P."/>
            <person name="Kawai J."/>
            <person name="Hayashizaki Y."/>
            <person name="Shinozaki K."/>
        </authorList>
    </citation>
    <scope>NUCLEOTIDE SEQUENCE [LARGE SCALE MRNA]</scope>
    <source>
        <strain>cv. Columbia</strain>
    </source>
</reference>
<reference key="6">
    <citation type="journal article" date="2002" name="Plant J.">
        <title>Condensin and cohesin knockouts in Arabidopsis exhibit a titan seed phenotype.</title>
        <authorList>
            <person name="Liu C.-M."/>
            <person name="McElver J."/>
            <person name="Tzafrir I."/>
            <person name="Joosen R."/>
            <person name="Wittich P."/>
            <person name="Patton D."/>
            <person name="Van Lammeren A.A.M."/>
            <person name="Meinke D."/>
        </authorList>
    </citation>
    <scope>FUNCTION</scope>
    <scope>DISRUPTION PHENOTYPE</scope>
</reference>
<reference key="7">
    <citation type="journal article" date="2002" name="Plant Physiol.">
        <title>Diversity of TITAN functions in Arabidopsis seed development.</title>
        <authorList>
            <person name="Tzafrir I."/>
            <person name="McElver J.A."/>
            <person name="Liu C.-M."/>
            <person name="Yang L.J."/>
            <person name="Wu J.Q."/>
            <person name="Martinez A."/>
            <person name="Patton D.A."/>
            <person name="Meinke D.W."/>
        </authorList>
    </citation>
    <scope>FUNCTION</scope>
    <scope>DISRUPTION PHENOTYPE</scope>
</reference>
<reference key="8">
    <citation type="journal article" date="2009" name="Chromosoma">
        <title>Cohesin gene defects may impair sister chromatid alignment and genome stability in Arabidopsis thaliana.</title>
        <authorList>
            <person name="Schubert V."/>
            <person name="Weissleder A."/>
            <person name="Ali H."/>
            <person name="Fuchs J."/>
            <person name="Lermontova I."/>
            <person name="Meister A."/>
            <person name="Schubert I."/>
        </authorList>
    </citation>
    <scope>FUNCTION</scope>
    <scope>DISRUPTION PHENOTYPE</scope>
</reference>
<accession>Q56YN8</accession>
<accession>Q0WNE4</accession>
<accession>Q0WWN8</accession>
<accession>Q56ZJ9</accession>
<accession>Q6QU76</accession>
<accession>Q8H2D2</accession>
<accession>Q8S8B4</accession>
<accession>Q9SHT1</accession>
<name>SMC3_ARATH</name>